<accession>P39906</accession>
<comment type="subcellular location">
    <subcellularLocation>
        <location evidence="2">Periplasm</location>
    </subcellularLocation>
</comment>
<comment type="similarity">
    <text evidence="2">Belongs to the bacterial solute-binding protein 3 family.</text>
</comment>
<proteinExistence type="inferred from homology"/>
<organism>
    <name type="scientific">Dichelobacter nodosus</name>
    <name type="common">Bacteroides nodosus</name>
    <dbReference type="NCBI Taxonomy" id="870"/>
    <lineage>
        <taxon>Bacteria</taxon>
        <taxon>Pseudomonadati</taxon>
        <taxon>Pseudomonadota</taxon>
        <taxon>Gammaproteobacteria</taxon>
        <taxon>Cardiobacteriales</taxon>
        <taxon>Cardiobacteriaceae</taxon>
        <taxon>Dichelobacter</taxon>
    </lineage>
</organism>
<sequence length="253" mass="28213">MPFLKTLFRGALCSIACGASLFCAADVYRIIRNYPELMPVSYMDEKGSPTGFETELIRKIAEQAQLDLKEEFVANFGDTLTALENGKADLAMATISVTPARQQIFDFTTPYFRVNPFAFITKDDSIKTIQDLANKKVSVWTGSNHEQKIKEIQKEGTGSVIPAKSIFLAVKAVIQGEADVAVGDDAYMLNFADRYKQHNLKAVIDRSTEPESYAIAVRKGDQALKKKIDDALLQLKRDGTIDALTKKWYPNRT</sequence>
<protein>
    <recommendedName>
        <fullName>Amino-acid-binding protein AabA</fullName>
    </recommendedName>
</protein>
<evidence type="ECO:0000255" key="1"/>
<evidence type="ECO:0000305" key="2"/>
<feature type="signal peptide" evidence="1">
    <location>
        <begin position="1"/>
        <end position="23"/>
    </location>
</feature>
<feature type="chain" id="PRO_0000031747" description="Amino-acid-binding protein AabA">
    <location>
        <begin position="24"/>
        <end position="253"/>
    </location>
</feature>
<keyword id="KW-0029">Amino-acid transport</keyword>
<keyword id="KW-0574">Periplasm</keyword>
<keyword id="KW-0732">Signal</keyword>
<keyword id="KW-0813">Transport</keyword>
<reference key="1">
    <citation type="journal article" date="1995" name="Microbiology">
        <title>A gene region in Dichelobacter nodosus encoding a lipopolysaccharide epitope.</title>
        <authorList>
            <person name="Billington S.J."/>
            <person name="Jost B.H."/>
            <person name="Rood J.I."/>
        </authorList>
    </citation>
    <scope>NUCLEOTIDE SEQUENCE [GENOMIC DNA]</scope>
    <source>
        <strain>A198</strain>
    </source>
</reference>
<dbReference type="EMBL" id="U06471">
    <property type="protein sequence ID" value="AAC43388.1"/>
    <property type="molecule type" value="Genomic_DNA"/>
</dbReference>
<dbReference type="SMR" id="P39906"/>
<dbReference type="GO" id="GO:0016020">
    <property type="term" value="C:membrane"/>
    <property type="evidence" value="ECO:0007669"/>
    <property type="project" value="InterPro"/>
</dbReference>
<dbReference type="GO" id="GO:0042597">
    <property type="term" value="C:periplasmic space"/>
    <property type="evidence" value="ECO:0007669"/>
    <property type="project" value="UniProtKB-SubCell"/>
</dbReference>
<dbReference type="GO" id="GO:0015276">
    <property type="term" value="F:ligand-gated monoatomic ion channel activity"/>
    <property type="evidence" value="ECO:0007669"/>
    <property type="project" value="InterPro"/>
</dbReference>
<dbReference type="GO" id="GO:0006865">
    <property type="term" value="P:amino acid transport"/>
    <property type="evidence" value="ECO:0007669"/>
    <property type="project" value="UniProtKB-KW"/>
</dbReference>
<dbReference type="CDD" id="cd13704">
    <property type="entry name" value="PBP2_HisK"/>
    <property type="match status" value="1"/>
</dbReference>
<dbReference type="Gene3D" id="3.40.190.10">
    <property type="entry name" value="Periplasmic binding protein-like II"/>
    <property type="match status" value="2"/>
</dbReference>
<dbReference type="InterPro" id="IPR001320">
    <property type="entry name" value="Iontro_rcpt_C"/>
</dbReference>
<dbReference type="InterPro" id="IPR018313">
    <property type="entry name" value="SBP_3_CS"/>
</dbReference>
<dbReference type="InterPro" id="IPR001638">
    <property type="entry name" value="Solute-binding_3/MltF_N"/>
</dbReference>
<dbReference type="PANTHER" id="PTHR35936:SF35">
    <property type="entry name" value="L-CYSTINE-BINDING PROTEIN TCYJ"/>
    <property type="match status" value="1"/>
</dbReference>
<dbReference type="PANTHER" id="PTHR35936">
    <property type="entry name" value="MEMBRANE-BOUND LYTIC MUREIN TRANSGLYCOSYLASE F"/>
    <property type="match status" value="1"/>
</dbReference>
<dbReference type="Pfam" id="PF00497">
    <property type="entry name" value="SBP_bac_3"/>
    <property type="match status" value="1"/>
</dbReference>
<dbReference type="SMART" id="SM00062">
    <property type="entry name" value="PBPb"/>
    <property type="match status" value="1"/>
</dbReference>
<dbReference type="SMART" id="SM00079">
    <property type="entry name" value="PBPe"/>
    <property type="match status" value="1"/>
</dbReference>
<dbReference type="SUPFAM" id="SSF53850">
    <property type="entry name" value="Periplasmic binding protein-like II"/>
    <property type="match status" value="1"/>
</dbReference>
<dbReference type="PROSITE" id="PS01039">
    <property type="entry name" value="SBP_BACTERIAL_3"/>
    <property type="match status" value="1"/>
</dbReference>
<name>AABA_DICNO</name>
<gene>
    <name type="primary">aabA</name>
</gene>